<sequence>MALQRSDVEKIAHLARLGLNEGELPRITDALNSILGLVDQMQAVDTTGIEPLAHPLETTQRLRPDQVTESNQRDRYQAVAPSTENGLYLVPKVID</sequence>
<gene>
    <name evidence="1" type="primary">gatC</name>
    <name type="ordered locus">PSEEN1073</name>
</gene>
<evidence type="ECO:0000255" key="1">
    <source>
        <dbReference type="HAMAP-Rule" id="MF_00122"/>
    </source>
</evidence>
<proteinExistence type="inferred from homology"/>
<reference key="1">
    <citation type="journal article" date="2006" name="Nat. Biotechnol.">
        <title>Complete genome sequence of the entomopathogenic and metabolically versatile soil bacterium Pseudomonas entomophila.</title>
        <authorList>
            <person name="Vodovar N."/>
            <person name="Vallenet D."/>
            <person name="Cruveiller S."/>
            <person name="Rouy Z."/>
            <person name="Barbe V."/>
            <person name="Acosta C."/>
            <person name="Cattolico L."/>
            <person name="Jubin C."/>
            <person name="Lajus A."/>
            <person name="Segurens B."/>
            <person name="Vacherie B."/>
            <person name="Wincker P."/>
            <person name="Weissenbach J."/>
            <person name="Lemaitre B."/>
            <person name="Medigue C."/>
            <person name="Boccard F."/>
        </authorList>
    </citation>
    <scope>NUCLEOTIDE SEQUENCE [LARGE SCALE GENOMIC DNA]</scope>
    <source>
        <strain>L48</strain>
    </source>
</reference>
<feature type="chain" id="PRO_1000016180" description="Aspartyl/glutamyl-tRNA(Asn/Gln) amidotransferase subunit C">
    <location>
        <begin position="1"/>
        <end position="95"/>
    </location>
</feature>
<keyword id="KW-0067">ATP-binding</keyword>
<keyword id="KW-0436">Ligase</keyword>
<keyword id="KW-0547">Nucleotide-binding</keyword>
<keyword id="KW-0648">Protein biosynthesis</keyword>
<name>GATC_PSEE4</name>
<organism>
    <name type="scientific">Pseudomonas entomophila (strain L48)</name>
    <dbReference type="NCBI Taxonomy" id="384676"/>
    <lineage>
        <taxon>Bacteria</taxon>
        <taxon>Pseudomonadati</taxon>
        <taxon>Pseudomonadota</taxon>
        <taxon>Gammaproteobacteria</taxon>
        <taxon>Pseudomonadales</taxon>
        <taxon>Pseudomonadaceae</taxon>
        <taxon>Pseudomonas</taxon>
    </lineage>
</organism>
<accession>Q1IED2</accession>
<protein>
    <recommendedName>
        <fullName evidence="1">Aspartyl/glutamyl-tRNA(Asn/Gln) amidotransferase subunit C</fullName>
        <shortName evidence="1">Asp/Glu-ADT subunit C</shortName>
        <ecNumber evidence="1">6.3.5.-</ecNumber>
    </recommendedName>
</protein>
<comment type="function">
    <text evidence="1">Allows the formation of correctly charged Asn-tRNA(Asn) or Gln-tRNA(Gln) through the transamidation of misacylated Asp-tRNA(Asn) or Glu-tRNA(Gln) in organisms which lack either or both of asparaginyl-tRNA or glutaminyl-tRNA synthetases. The reaction takes place in the presence of glutamine and ATP through an activated phospho-Asp-tRNA(Asn) or phospho-Glu-tRNA(Gln).</text>
</comment>
<comment type="catalytic activity">
    <reaction evidence="1">
        <text>L-glutamyl-tRNA(Gln) + L-glutamine + ATP + H2O = L-glutaminyl-tRNA(Gln) + L-glutamate + ADP + phosphate + H(+)</text>
        <dbReference type="Rhea" id="RHEA:17521"/>
        <dbReference type="Rhea" id="RHEA-COMP:9681"/>
        <dbReference type="Rhea" id="RHEA-COMP:9684"/>
        <dbReference type="ChEBI" id="CHEBI:15377"/>
        <dbReference type="ChEBI" id="CHEBI:15378"/>
        <dbReference type="ChEBI" id="CHEBI:29985"/>
        <dbReference type="ChEBI" id="CHEBI:30616"/>
        <dbReference type="ChEBI" id="CHEBI:43474"/>
        <dbReference type="ChEBI" id="CHEBI:58359"/>
        <dbReference type="ChEBI" id="CHEBI:78520"/>
        <dbReference type="ChEBI" id="CHEBI:78521"/>
        <dbReference type="ChEBI" id="CHEBI:456216"/>
    </reaction>
</comment>
<comment type="catalytic activity">
    <reaction evidence="1">
        <text>L-aspartyl-tRNA(Asn) + L-glutamine + ATP + H2O = L-asparaginyl-tRNA(Asn) + L-glutamate + ADP + phosphate + 2 H(+)</text>
        <dbReference type="Rhea" id="RHEA:14513"/>
        <dbReference type="Rhea" id="RHEA-COMP:9674"/>
        <dbReference type="Rhea" id="RHEA-COMP:9677"/>
        <dbReference type="ChEBI" id="CHEBI:15377"/>
        <dbReference type="ChEBI" id="CHEBI:15378"/>
        <dbReference type="ChEBI" id="CHEBI:29985"/>
        <dbReference type="ChEBI" id="CHEBI:30616"/>
        <dbReference type="ChEBI" id="CHEBI:43474"/>
        <dbReference type="ChEBI" id="CHEBI:58359"/>
        <dbReference type="ChEBI" id="CHEBI:78515"/>
        <dbReference type="ChEBI" id="CHEBI:78516"/>
        <dbReference type="ChEBI" id="CHEBI:456216"/>
    </reaction>
</comment>
<comment type="subunit">
    <text evidence="1">Heterotrimer of A, B and C subunits.</text>
</comment>
<comment type="similarity">
    <text evidence="1">Belongs to the GatC family.</text>
</comment>
<dbReference type="EC" id="6.3.5.-" evidence="1"/>
<dbReference type="EMBL" id="CT573326">
    <property type="protein sequence ID" value="CAK13973.1"/>
    <property type="molecule type" value="Genomic_DNA"/>
</dbReference>
<dbReference type="RefSeq" id="WP_011532396.1">
    <property type="nucleotide sequence ID" value="NC_008027.1"/>
</dbReference>
<dbReference type="SMR" id="Q1IED2"/>
<dbReference type="STRING" id="384676.PSEEN1073"/>
<dbReference type="GeneID" id="32804364"/>
<dbReference type="KEGG" id="pen:PSEEN1073"/>
<dbReference type="eggNOG" id="COG0721">
    <property type="taxonomic scope" value="Bacteria"/>
</dbReference>
<dbReference type="HOGENOM" id="CLU_105899_2_2_6"/>
<dbReference type="OrthoDB" id="9794326at2"/>
<dbReference type="Proteomes" id="UP000000658">
    <property type="component" value="Chromosome"/>
</dbReference>
<dbReference type="GO" id="GO:0050566">
    <property type="term" value="F:asparaginyl-tRNA synthase (glutamine-hydrolyzing) activity"/>
    <property type="evidence" value="ECO:0007669"/>
    <property type="project" value="RHEA"/>
</dbReference>
<dbReference type="GO" id="GO:0005524">
    <property type="term" value="F:ATP binding"/>
    <property type="evidence" value="ECO:0007669"/>
    <property type="project" value="UniProtKB-KW"/>
</dbReference>
<dbReference type="GO" id="GO:0050567">
    <property type="term" value="F:glutaminyl-tRNA synthase (glutamine-hydrolyzing) activity"/>
    <property type="evidence" value="ECO:0007669"/>
    <property type="project" value="UniProtKB-UniRule"/>
</dbReference>
<dbReference type="GO" id="GO:0070681">
    <property type="term" value="P:glutaminyl-tRNAGln biosynthesis via transamidation"/>
    <property type="evidence" value="ECO:0007669"/>
    <property type="project" value="TreeGrafter"/>
</dbReference>
<dbReference type="GO" id="GO:0006450">
    <property type="term" value="P:regulation of translational fidelity"/>
    <property type="evidence" value="ECO:0007669"/>
    <property type="project" value="InterPro"/>
</dbReference>
<dbReference type="GO" id="GO:0006412">
    <property type="term" value="P:translation"/>
    <property type="evidence" value="ECO:0007669"/>
    <property type="project" value="UniProtKB-UniRule"/>
</dbReference>
<dbReference type="Gene3D" id="1.10.20.60">
    <property type="entry name" value="Glu-tRNAGln amidotransferase C subunit, N-terminal domain"/>
    <property type="match status" value="1"/>
</dbReference>
<dbReference type="HAMAP" id="MF_00122">
    <property type="entry name" value="GatC"/>
    <property type="match status" value="1"/>
</dbReference>
<dbReference type="InterPro" id="IPR036113">
    <property type="entry name" value="Asp/Glu-ADT_sf_sub_c"/>
</dbReference>
<dbReference type="InterPro" id="IPR003837">
    <property type="entry name" value="GatC"/>
</dbReference>
<dbReference type="NCBIfam" id="TIGR00135">
    <property type="entry name" value="gatC"/>
    <property type="match status" value="1"/>
</dbReference>
<dbReference type="PANTHER" id="PTHR15004">
    <property type="entry name" value="GLUTAMYL-TRNA(GLN) AMIDOTRANSFERASE SUBUNIT C, MITOCHONDRIAL"/>
    <property type="match status" value="1"/>
</dbReference>
<dbReference type="PANTHER" id="PTHR15004:SF0">
    <property type="entry name" value="GLUTAMYL-TRNA(GLN) AMIDOTRANSFERASE SUBUNIT C, MITOCHONDRIAL"/>
    <property type="match status" value="1"/>
</dbReference>
<dbReference type="Pfam" id="PF02686">
    <property type="entry name" value="GatC"/>
    <property type="match status" value="1"/>
</dbReference>
<dbReference type="SUPFAM" id="SSF141000">
    <property type="entry name" value="Glu-tRNAGln amidotransferase C subunit"/>
    <property type="match status" value="1"/>
</dbReference>